<sequence length="277" mass="31435">MELIEKHASFGGWQNVYRHYSQSLKCEMNVGVYLPPKAENEKLPVLYWLSGLTCNEQNFITKSGMQRYAAEHNIIVVAPDTSPRGSHVADADRYDLGQGAGFYLNATQAPWNEHYKMYDYIRNELPNLVMHHFPATARKSISGHSMGGLGALVLALRNPDEYVSVSAFSPIVSPSQVPWGQQAFAAYLGENKDAWLDYDPVSLISQGQRVAEIMVDQGLSDDFYAEQLRTPNLEKICQEMNIKTLIRYHEGYDHSYYFVSSFIGEHIAYHANKLNMR</sequence>
<comment type="function">
    <text evidence="1">Serine hydrolase involved in the detoxification of formaldehyde. Hydrolyzes S-formylglutathione to glutathione and formate (By similarity).</text>
</comment>
<comment type="catalytic activity">
    <reaction>
        <text>S-formylglutathione + H2O = formate + glutathione + H(+)</text>
        <dbReference type="Rhea" id="RHEA:14961"/>
        <dbReference type="ChEBI" id="CHEBI:15377"/>
        <dbReference type="ChEBI" id="CHEBI:15378"/>
        <dbReference type="ChEBI" id="CHEBI:15740"/>
        <dbReference type="ChEBI" id="CHEBI:57688"/>
        <dbReference type="ChEBI" id="CHEBI:57925"/>
        <dbReference type="EC" id="3.1.2.12"/>
    </reaction>
</comment>
<comment type="similarity">
    <text evidence="2">Belongs to the esterase D family.</text>
</comment>
<name>SFGH1_ECOUT</name>
<proteinExistence type="inferred from homology"/>
<accession>Q1RFI8</accession>
<feature type="chain" id="PRO_0000341657" description="S-formylglutathione hydrolase FrmB">
    <location>
        <begin position="1"/>
        <end position="277"/>
    </location>
</feature>
<feature type="active site" description="Charge relay system" evidence="1">
    <location>
        <position position="145"/>
    </location>
</feature>
<feature type="active site" description="Charge relay system" evidence="1">
    <location>
        <position position="221"/>
    </location>
</feature>
<feature type="active site" description="Charge relay system" evidence="1">
    <location>
        <position position="254"/>
    </location>
</feature>
<reference key="1">
    <citation type="journal article" date="2006" name="Proc. Natl. Acad. Sci. U.S.A.">
        <title>Identification of genes subject to positive selection in uropathogenic strains of Escherichia coli: a comparative genomics approach.</title>
        <authorList>
            <person name="Chen S.L."/>
            <person name="Hung C.-S."/>
            <person name="Xu J."/>
            <person name="Reigstad C.S."/>
            <person name="Magrini V."/>
            <person name="Sabo A."/>
            <person name="Blasiar D."/>
            <person name="Bieri T."/>
            <person name="Meyer R.R."/>
            <person name="Ozersky P."/>
            <person name="Armstrong J.R."/>
            <person name="Fulton R.S."/>
            <person name="Latreille J.P."/>
            <person name="Spieth J."/>
            <person name="Hooton T.M."/>
            <person name="Mardis E.R."/>
            <person name="Hultgren S.J."/>
            <person name="Gordon J.I."/>
        </authorList>
    </citation>
    <scope>NUCLEOTIDE SEQUENCE [LARGE SCALE GENOMIC DNA]</scope>
    <source>
        <strain>UTI89 / UPEC</strain>
    </source>
</reference>
<keyword id="KW-0378">Hydrolase</keyword>
<keyword id="KW-0719">Serine esterase</keyword>
<protein>
    <recommendedName>
        <fullName>S-formylglutathione hydrolase FrmB</fullName>
        <shortName>FGH</shortName>
        <ecNumber>3.1.2.12</ecNumber>
    </recommendedName>
</protein>
<evidence type="ECO:0000250" key="1"/>
<evidence type="ECO:0000305" key="2"/>
<organism>
    <name type="scientific">Escherichia coli (strain UTI89 / UPEC)</name>
    <dbReference type="NCBI Taxonomy" id="364106"/>
    <lineage>
        <taxon>Bacteria</taxon>
        <taxon>Pseudomonadati</taxon>
        <taxon>Pseudomonadota</taxon>
        <taxon>Gammaproteobacteria</taxon>
        <taxon>Enterobacterales</taxon>
        <taxon>Enterobacteriaceae</taxon>
        <taxon>Escherichia</taxon>
    </lineage>
</organism>
<dbReference type="EC" id="3.1.2.12"/>
<dbReference type="EMBL" id="CP000243">
    <property type="protein sequence ID" value="ABE05876.1"/>
    <property type="molecule type" value="Genomic_DNA"/>
</dbReference>
<dbReference type="SMR" id="Q1RFI8"/>
<dbReference type="ESTHER" id="ecoli-yaim">
    <property type="family name" value="A85-EsteraseD-FGH"/>
</dbReference>
<dbReference type="MEROPS" id="S09.940"/>
<dbReference type="KEGG" id="eci:UTI89_C0375"/>
<dbReference type="HOGENOM" id="CLU_056472_0_0_6"/>
<dbReference type="Proteomes" id="UP000001952">
    <property type="component" value="Chromosome"/>
</dbReference>
<dbReference type="GO" id="GO:0005829">
    <property type="term" value="C:cytosol"/>
    <property type="evidence" value="ECO:0007669"/>
    <property type="project" value="TreeGrafter"/>
</dbReference>
<dbReference type="GO" id="GO:0052689">
    <property type="term" value="F:carboxylic ester hydrolase activity"/>
    <property type="evidence" value="ECO:0007669"/>
    <property type="project" value="UniProtKB-KW"/>
</dbReference>
<dbReference type="GO" id="GO:0018738">
    <property type="term" value="F:S-formylglutathione hydrolase activity"/>
    <property type="evidence" value="ECO:0007669"/>
    <property type="project" value="UniProtKB-EC"/>
</dbReference>
<dbReference type="GO" id="GO:0046294">
    <property type="term" value="P:formaldehyde catabolic process"/>
    <property type="evidence" value="ECO:0007669"/>
    <property type="project" value="InterPro"/>
</dbReference>
<dbReference type="FunFam" id="3.40.50.1820:FF:000002">
    <property type="entry name" value="S-formylglutathione hydrolase"/>
    <property type="match status" value="1"/>
</dbReference>
<dbReference type="Gene3D" id="3.40.50.1820">
    <property type="entry name" value="alpha/beta hydrolase"/>
    <property type="match status" value="1"/>
</dbReference>
<dbReference type="InterPro" id="IPR029058">
    <property type="entry name" value="AB_hydrolase_fold"/>
</dbReference>
<dbReference type="InterPro" id="IPR000801">
    <property type="entry name" value="Esterase-like"/>
</dbReference>
<dbReference type="InterPro" id="IPR014186">
    <property type="entry name" value="S-formylglutathione_hydrol"/>
</dbReference>
<dbReference type="NCBIfam" id="TIGR02821">
    <property type="entry name" value="fghA_ester_D"/>
    <property type="match status" value="1"/>
</dbReference>
<dbReference type="PANTHER" id="PTHR10061">
    <property type="entry name" value="S-FORMYLGLUTATHIONE HYDROLASE"/>
    <property type="match status" value="1"/>
</dbReference>
<dbReference type="PANTHER" id="PTHR10061:SF0">
    <property type="entry name" value="S-FORMYLGLUTATHIONE HYDROLASE"/>
    <property type="match status" value="1"/>
</dbReference>
<dbReference type="Pfam" id="PF00756">
    <property type="entry name" value="Esterase"/>
    <property type="match status" value="1"/>
</dbReference>
<dbReference type="SUPFAM" id="SSF53474">
    <property type="entry name" value="alpha/beta-Hydrolases"/>
    <property type="match status" value="1"/>
</dbReference>
<gene>
    <name type="primary">frmB</name>
    <name type="ordered locus">UTI89_C0375</name>
</gene>